<feature type="chain" id="PRO_0000236619" description="Large ribosomal subunit protein bL9">
    <location>
        <begin position="1"/>
        <end position="186"/>
    </location>
</feature>
<feature type="region of interest" description="Disordered" evidence="2">
    <location>
        <begin position="153"/>
        <end position="186"/>
    </location>
</feature>
<feature type="compositionally biased region" description="Low complexity" evidence="2">
    <location>
        <begin position="157"/>
        <end position="169"/>
    </location>
</feature>
<comment type="function">
    <text evidence="1">Binds to the 23S rRNA.</text>
</comment>
<comment type="similarity">
    <text evidence="1">Belongs to the bacterial ribosomal protein bL9 family.</text>
</comment>
<protein>
    <recommendedName>
        <fullName evidence="1">Large ribosomal subunit protein bL9</fullName>
    </recommendedName>
    <alternativeName>
        <fullName evidence="3">50S ribosomal protein L9</fullName>
    </alternativeName>
</protein>
<evidence type="ECO:0000255" key="1">
    <source>
        <dbReference type="HAMAP-Rule" id="MF_00503"/>
    </source>
</evidence>
<evidence type="ECO:0000256" key="2">
    <source>
        <dbReference type="SAM" id="MobiDB-lite"/>
    </source>
</evidence>
<evidence type="ECO:0000305" key="3"/>
<gene>
    <name evidence="1" type="primary">rplI</name>
    <name type="ordered locus">Wbm0502</name>
</gene>
<sequence>MLVILKENIRTLGKLGEIVKVKPGYARNFLFPQRKAVKATKESIAKLEEQRSFLEEENIRKLNLASELAASFAGKFVILVKQASEDGKIFGSVTTREVARSLSQEYEVDHRKISFNGVKIRNLGEYQASIEFHSEIVVQVAVHVVRSETDAHELRQVKSQSQKSQQQEAKQNEVGEATDSDKADQK</sequence>
<accession>Q5GSD4</accession>
<proteinExistence type="inferred from homology"/>
<organism>
    <name type="scientific">Wolbachia sp. subsp. Brugia malayi (strain TRS)</name>
    <dbReference type="NCBI Taxonomy" id="292805"/>
    <lineage>
        <taxon>Bacteria</taxon>
        <taxon>Pseudomonadati</taxon>
        <taxon>Pseudomonadota</taxon>
        <taxon>Alphaproteobacteria</taxon>
        <taxon>Rickettsiales</taxon>
        <taxon>Anaplasmataceae</taxon>
        <taxon>Wolbachieae</taxon>
        <taxon>Wolbachia</taxon>
    </lineage>
</organism>
<keyword id="KW-1185">Reference proteome</keyword>
<keyword id="KW-0687">Ribonucleoprotein</keyword>
<keyword id="KW-0689">Ribosomal protein</keyword>
<keyword id="KW-0694">RNA-binding</keyword>
<keyword id="KW-0699">rRNA-binding</keyword>
<dbReference type="EMBL" id="AE017321">
    <property type="protein sequence ID" value="AAW71090.1"/>
    <property type="molecule type" value="Genomic_DNA"/>
</dbReference>
<dbReference type="RefSeq" id="WP_011256700.1">
    <property type="nucleotide sequence ID" value="NC_006833.1"/>
</dbReference>
<dbReference type="SMR" id="Q5GSD4"/>
<dbReference type="STRING" id="292805.Wbm0502"/>
<dbReference type="KEGG" id="wbm:Wbm0502"/>
<dbReference type="eggNOG" id="COG0359">
    <property type="taxonomic scope" value="Bacteria"/>
</dbReference>
<dbReference type="HOGENOM" id="CLU_078938_1_1_5"/>
<dbReference type="Proteomes" id="UP000000534">
    <property type="component" value="Chromosome"/>
</dbReference>
<dbReference type="GO" id="GO:1990904">
    <property type="term" value="C:ribonucleoprotein complex"/>
    <property type="evidence" value="ECO:0007669"/>
    <property type="project" value="UniProtKB-KW"/>
</dbReference>
<dbReference type="GO" id="GO:0005840">
    <property type="term" value="C:ribosome"/>
    <property type="evidence" value="ECO:0007669"/>
    <property type="project" value="UniProtKB-KW"/>
</dbReference>
<dbReference type="GO" id="GO:0019843">
    <property type="term" value="F:rRNA binding"/>
    <property type="evidence" value="ECO:0007669"/>
    <property type="project" value="UniProtKB-UniRule"/>
</dbReference>
<dbReference type="GO" id="GO:0003735">
    <property type="term" value="F:structural constituent of ribosome"/>
    <property type="evidence" value="ECO:0007669"/>
    <property type="project" value="InterPro"/>
</dbReference>
<dbReference type="GO" id="GO:0006412">
    <property type="term" value="P:translation"/>
    <property type="evidence" value="ECO:0007669"/>
    <property type="project" value="UniProtKB-UniRule"/>
</dbReference>
<dbReference type="Gene3D" id="3.10.430.100">
    <property type="entry name" value="Ribosomal protein L9, C-terminal domain"/>
    <property type="match status" value="1"/>
</dbReference>
<dbReference type="Gene3D" id="3.40.5.10">
    <property type="entry name" value="Ribosomal protein L9, N-terminal domain"/>
    <property type="match status" value="1"/>
</dbReference>
<dbReference type="HAMAP" id="MF_00503">
    <property type="entry name" value="Ribosomal_bL9"/>
    <property type="match status" value="1"/>
</dbReference>
<dbReference type="InterPro" id="IPR000244">
    <property type="entry name" value="Ribosomal_bL9"/>
</dbReference>
<dbReference type="InterPro" id="IPR009027">
    <property type="entry name" value="Ribosomal_bL9/RNase_H1_N"/>
</dbReference>
<dbReference type="InterPro" id="IPR020594">
    <property type="entry name" value="Ribosomal_bL9_bac/chp"/>
</dbReference>
<dbReference type="InterPro" id="IPR020069">
    <property type="entry name" value="Ribosomal_bL9_C"/>
</dbReference>
<dbReference type="InterPro" id="IPR036791">
    <property type="entry name" value="Ribosomal_bL9_C_sf"/>
</dbReference>
<dbReference type="InterPro" id="IPR020070">
    <property type="entry name" value="Ribosomal_bL9_N"/>
</dbReference>
<dbReference type="InterPro" id="IPR036935">
    <property type="entry name" value="Ribosomal_bL9_N_sf"/>
</dbReference>
<dbReference type="NCBIfam" id="TIGR00158">
    <property type="entry name" value="L9"/>
    <property type="match status" value="1"/>
</dbReference>
<dbReference type="PANTHER" id="PTHR21368">
    <property type="entry name" value="50S RIBOSOMAL PROTEIN L9"/>
    <property type="match status" value="1"/>
</dbReference>
<dbReference type="Pfam" id="PF03948">
    <property type="entry name" value="Ribosomal_L9_C"/>
    <property type="match status" value="1"/>
</dbReference>
<dbReference type="Pfam" id="PF01281">
    <property type="entry name" value="Ribosomal_L9_N"/>
    <property type="match status" value="1"/>
</dbReference>
<dbReference type="SUPFAM" id="SSF55658">
    <property type="entry name" value="L9 N-domain-like"/>
    <property type="match status" value="1"/>
</dbReference>
<dbReference type="SUPFAM" id="SSF55653">
    <property type="entry name" value="Ribosomal protein L9 C-domain"/>
    <property type="match status" value="1"/>
</dbReference>
<dbReference type="PROSITE" id="PS00651">
    <property type="entry name" value="RIBOSOMAL_L9"/>
    <property type="match status" value="1"/>
</dbReference>
<name>RL9_WOLTR</name>
<reference key="1">
    <citation type="journal article" date="2005" name="PLoS Biol.">
        <title>The Wolbachia genome of Brugia malayi: endosymbiont evolution within a human pathogenic nematode.</title>
        <authorList>
            <person name="Foster J."/>
            <person name="Ganatra M."/>
            <person name="Kamal I."/>
            <person name="Ware J."/>
            <person name="Makarova K."/>
            <person name="Ivanova N."/>
            <person name="Bhattacharyya A."/>
            <person name="Kapatral V."/>
            <person name="Kumar S."/>
            <person name="Posfai J."/>
            <person name="Vincze T."/>
            <person name="Ingram J."/>
            <person name="Moran L."/>
            <person name="Lapidus A."/>
            <person name="Omelchenko M."/>
            <person name="Kyrpides N."/>
            <person name="Ghedin E."/>
            <person name="Wang S."/>
            <person name="Goltsman E."/>
            <person name="Joukov V."/>
            <person name="Ostrovskaya O."/>
            <person name="Tsukerman K."/>
            <person name="Mazur M."/>
            <person name="Comb D."/>
            <person name="Koonin E."/>
            <person name="Slatko B."/>
        </authorList>
    </citation>
    <scope>NUCLEOTIDE SEQUENCE [LARGE SCALE GENOMIC DNA]</scope>
    <source>
        <strain>TRS</strain>
    </source>
</reference>